<keyword id="KW-0456">Lyase</keyword>
<keyword id="KW-0520">NAD</keyword>
<keyword id="KW-0547">Nucleotide-binding</keyword>
<keyword id="KW-1185">Reference proteome</keyword>
<name>AOCD_METTH</name>
<reference key="1">
    <citation type="journal article" date="1997" name="J. Bacteriol.">
        <title>Complete genome sequence of Methanobacterium thermoautotrophicum deltaH: functional analysis and comparative genomics.</title>
        <authorList>
            <person name="Smith D.R."/>
            <person name="Doucette-Stamm L.A."/>
            <person name="Deloughery C."/>
            <person name="Lee H.-M."/>
            <person name="Dubois J."/>
            <person name="Aldredge T."/>
            <person name="Bashirzadeh R."/>
            <person name="Blakely D."/>
            <person name="Cook R."/>
            <person name="Gilbert K."/>
            <person name="Harrison D."/>
            <person name="Hoang L."/>
            <person name="Keagle P."/>
            <person name="Lumm W."/>
            <person name="Pothier B."/>
            <person name="Qiu D."/>
            <person name="Spadafora R."/>
            <person name="Vicare R."/>
            <person name="Wang Y."/>
            <person name="Wierzbowski J."/>
            <person name="Gibson R."/>
            <person name="Jiwani N."/>
            <person name="Caruso A."/>
            <person name="Bush D."/>
            <person name="Safer H."/>
            <person name="Patwell D."/>
            <person name="Prabhakar S."/>
            <person name="McDougall S."/>
            <person name="Shimer G."/>
            <person name="Goyal A."/>
            <person name="Pietrovski S."/>
            <person name="Church G.M."/>
            <person name="Daniels C.J."/>
            <person name="Mao J.-I."/>
            <person name="Rice P."/>
            <person name="Noelling J."/>
            <person name="Reeve J.N."/>
        </authorList>
    </citation>
    <scope>NUCLEOTIDE SEQUENCE [LARGE SCALE GENOMIC DNA]</scope>
    <source>
        <strain>ATCC 29096 / DSM 1053 / JCM 10044 / NBRC 100330 / Delta H</strain>
    </source>
</reference>
<sequence>MNTREVELRGHIIDSLILPRALDIIMDMGGDFQILEIDIGKRKSDPSHARILVEAETPSLLNQILDELGEIGASIAEIKEAELRRAPMDRVLPDDFYSTTNHQTFIYHGGEWVEVEGIEMDCMIVVDPESRTARCKPIREIKKGDLVVVGREGIKVVPPERPRGKQGVFEFMGSEVSSEKPLVTTIKKIASEITEIKKRGGRIGLVGGPAIVHTGSAPVIAEMIRLGFIDVLFAGNALATHDIECALYGTSLGVDIDRGEAVSRGHRHHINAINEINRAGSIRDAVEQGVLTSGIMYECVKNDVPFVLAGSIRDDGPLPDVITDVMEAQNEMRKYVQDLDMVIMIATMLHSIATGNILPSRVKTICVDINPATVTKLSDRGSSQAVSVVTDVGAFIPILLHEIKKMNGLGD</sequence>
<proteinExistence type="inferred from homology"/>
<gene>
    <name type="ordered locus">MTH_867</name>
</gene>
<accession>O26953</accession>
<feature type="chain" id="PRO_0000107365" description="Ornithine cyclodeaminase">
    <location>
        <begin position="1"/>
        <end position="411"/>
    </location>
</feature>
<feature type="binding site" evidence="2">
    <location>
        <position position="236"/>
    </location>
    <ligand>
        <name>NAD(+)</name>
        <dbReference type="ChEBI" id="CHEBI:57540"/>
    </ligand>
</feature>
<feature type="binding site" evidence="2">
    <location>
        <position position="237"/>
    </location>
    <ligand>
        <name>NAD(+)</name>
        <dbReference type="ChEBI" id="CHEBI:57540"/>
    </ligand>
</feature>
<feature type="binding site" evidence="2">
    <location>
        <position position="315"/>
    </location>
    <ligand>
        <name>NAD(+)</name>
        <dbReference type="ChEBI" id="CHEBI:57540"/>
    </ligand>
</feature>
<feature type="binding site" evidence="2">
    <location>
        <position position="347"/>
    </location>
    <ligand>
        <name>NAD(+)</name>
        <dbReference type="ChEBI" id="CHEBI:57540"/>
    </ligand>
</feature>
<feature type="binding site" evidence="2">
    <location>
        <position position="348"/>
    </location>
    <ligand>
        <name>NAD(+)</name>
        <dbReference type="ChEBI" id="CHEBI:57540"/>
    </ligand>
</feature>
<feature type="binding site" evidence="2">
    <location>
        <position position="349"/>
    </location>
    <ligand>
        <name>NAD(+)</name>
        <dbReference type="ChEBI" id="CHEBI:57540"/>
    </ligand>
</feature>
<feature type="binding site" evidence="2">
    <location>
        <position position="350"/>
    </location>
    <ligand>
        <name>NAD(+)</name>
        <dbReference type="ChEBI" id="CHEBI:57540"/>
    </ligand>
</feature>
<feature type="binding site" evidence="2">
    <location>
        <position position="368"/>
    </location>
    <ligand>
        <name>NAD(+)</name>
        <dbReference type="ChEBI" id="CHEBI:57540"/>
    </ligand>
</feature>
<feature type="binding site" evidence="2">
    <location>
        <position position="391"/>
    </location>
    <ligand>
        <name>NAD(+)</name>
        <dbReference type="ChEBI" id="CHEBI:57540"/>
    </ligand>
</feature>
<feature type="binding site" evidence="2">
    <location>
        <position position="392"/>
    </location>
    <ligand>
        <name>NAD(+)</name>
        <dbReference type="ChEBI" id="CHEBI:57540"/>
    </ligand>
</feature>
<evidence type="ECO:0000250" key="1">
    <source>
        <dbReference type="UniProtKB" id="Q6LXX7"/>
    </source>
</evidence>
<evidence type="ECO:0000250" key="2">
    <source>
        <dbReference type="UniProtKB" id="Q8YMD9"/>
    </source>
</evidence>
<evidence type="ECO:0000305" key="3"/>
<protein>
    <recommendedName>
        <fullName evidence="1">Ornithine cyclodeaminase</fullName>
        <shortName evidence="1">OCD</shortName>
        <ecNumber evidence="1">4.3.1.12</ecNumber>
    </recommendedName>
    <alternativeName>
        <fullName evidence="1">Archaeal ornithine cyclodeaminase</fullName>
    </alternativeName>
</protein>
<organism>
    <name type="scientific">Methanothermobacter thermautotrophicus (strain ATCC 29096 / DSM 1053 / JCM 10044 / NBRC 100330 / Delta H)</name>
    <name type="common">Methanobacterium thermoautotrophicum</name>
    <dbReference type="NCBI Taxonomy" id="187420"/>
    <lineage>
        <taxon>Archaea</taxon>
        <taxon>Methanobacteriati</taxon>
        <taxon>Methanobacteriota</taxon>
        <taxon>Methanomada group</taxon>
        <taxon>Methanobacteria</taxon>
        <taxon>Methanobacteriales</taxon>
        <taxon>Methanobacteriaceae</taxon>
        <taxon>Methanothermobacter</taxon>
    </lineage>
</organism>
<comment type="function">
    <text evidence="1">Catalyzes the conversion of ornithine to proline, with the release of ammonia.</text>
</comment>
<comment type="catalytic activity">
    <reaction evidence="1">
        <text>L-ornithine = L-proline + NH4(+)</text>
        <dbReference type="Rhea" id="RHEA:24368"/>
        <dbReference type="ChEBI" id="CHEBI:28938"/>
        <dbReference type="ChEBI" id="CHEBI:46911"/>
        <dbReference type="ChEBI" id="CHEBI:60039"/>
        <dbReference type="EC" id="4.3.1.12"/>
    </reaction>
</comment>
<comment type="cofactor">
    <cofactor evidence="2">
        <name>NAD(+)</name>
        <dbReference type="ChEBI" id="CHEBI:57540"/>
    </cofactor>
</comment>
<comment type="similarity">
    <text evidence="3">Belongs to the AgrE/ArgZ ornithine cyclodeaminase family.</text>
</comment>
<dbReference type="EC" id="4.3.1.12" evidence="1"/>
<dbReference type="EMBL" id="AE000666">
    <property type="protein sequence ID" value="AAB85365.1"/>
    <property type="molecule type" value="Genomic_DNA"/>
</dbReference>
<dbReference type="PIR" id="G69215">
    <property type="entry name" value="G69215"/>
</dbReference>
<dbReference type="RefSeq" id="WP_010876500.1">
    <property type="nucleotide sequence ID" value="NC_000916.1"/>
</dbReference>
<dbReference type="SMR" id="O26953"/>
<dbReference type="STRING" id="187420.MTH_867"/>
<dbReference type="PaxDb" id="187420-MTH_867"/>
<dbReference type="DNASU" id="1471275"/>
<dbReference type="EnsemblBacteria" id="AAB85365">
    <property type="protein sequence ID" value="AAB85365"/>
    <property type="gene ID" value="MTH_867"/>
</dbReference>
<dbReference type="GeneID" id="1471275"/>
<dbReference type="KEGG" id="mth:MTH_867"/>
<dbReference type="PATRIC" id="fig|187420.15.peg.851"/>
<dbReference type="HOGENOM" id="CLU_056125_0_0_2"/>
<dbReference type="InParanoid" id="O26953"/>
<dbReference type="Proteomes" id="UP000005223">
    <property type="component" value="Chromosome"/>
</dbReference>
<dbReference type="CDD" id="cd12144">
    <property type="entry name" value="SDH_N_domain"/>
    <property type="match status" value="1"/>
</dbReference>
<dbReference type="Gene3D" id="2.40.420.10">
    <property type="entry name" value="conserved putative lor/sdh protein from methanococcus maripaludis s2 domain"/>
    <property type="match status" value="1"/>
</dbReference>
<dbReference type="Gene3D" id="3.40.50.10690">
    <property type="entry name" value="putative lor/sdh protein like domains"/>
    <property type="match status" value="1"/>
</dbReference>
<dbReference type="InterPro" id="IPR005239">
    <property type="entry name" value="ArgZ/ArgE-like"/>
</dbReference>
<dbReference type="InterPro" id="IPR048964">
    <property type="entry name" value="ArgZ/ArgE-like_C_1st"/>
</dbReference>
<dbReference type="InterPro" id="IPR048963">
    <property type="entry name" value="ArgZ/ArgE-like_C_2nd"/>
</dbReference>
<dbReference type="InterPro" id="IPR029035">
    <property type="entry name" value="DHS-like_NAD/FAD-binding_dom"/>
</dbReference>
<dbReference type="InterPro" id="IPR007545">
    <property type="entry name" value="LOR/SDH_bifunc_enz_cons_dom"/>
</dbReference>
<dbReference type="NCBIfam" id="TIGR00300">
    <property type="entry name" value="TIGR00300 family protein"/>
    <property type="match status" value="1"/>
</dbReference>
<dbReference type="Pfam" id="PF21571">
    <property type="entry name" value="ArgZ-like_C_1st"/>
    <property type="match status" value="1"/>
</dbReference>
<dbReference type="Pfam" id="PF21570">
    <property type="entry name" value="ArgZ-like_C_2nd"/>
    <property type="match status" value="1"/>
</dbReference>
<dbReference type="Pfam" id="PF04455">
    <property type="entry name" value="Saccharop_dh_N"/>
    <property type="match status" value="1"/>
</dbReference>
<dbReference type="SUPFAM" id="SSF52467">
    <property type="entry name" value="DHS-like NAD/FAD-binding domain"/>
    <property type="match status" value="1"/>
</dbReference>